<proteinExistence type="inferred from homology"/>
<reference key="1">
    <citation type="submission" date="2006-05" db="EMBL/GenBank/DDBJ databases">
        <title>Complete sequence of chromosome 1 of Burkholderia cenocepacia AU 1054.</title>
        <authorList>
            <consortium name="US DOE Joint Genome Institute"/>
            <person name="Copeland A."/>
            <person name="Lucas S."/>
            <person name="Lapidus A."/>
            <person name="Barry K."/>
            <person name="Detter J.C."/>
            <person name="Glavina del Rio T."/>
            <person name="Hammon N."/>
            <person name="Israni S."/>
            <person name="Dalin E."/>
            <person name="Tice H."/>
            <person name="Pitluck S."/>
            <person name="Chain P."/>
            <person name="Malfatti S."/>
            <person name="Shin M."/>
            <person name="Vergez L."/>
            <person name="Schmutz J."/>
            <person name="Larimer F."/>
            <person name="Land M."/>
            <person name="Hauser L."/>
            <person name="Kyrpides N."/>
            <person name="Lykidis A."/>
            <person name="LiPuma J.J."/>
            <person name="Konstantinidis K."/>
            <person name="Tiedje J.M."/>
            <person name="Richardson P."/>
        </authorList>
    </citation>
    <scope>NUCLEOTIDE SEQUENCE [LARGE SCALE GENOMIC DNA]</scope>
    <source>
        <strain>AU 1054</strain>
    </source>
</reference>
<sequence>MTTDTTGRTGNPAAAASPDRFRYGFLKGNPQLTKNGELKHLLSIEGLPRSIVNHILDTAEQFVSVTDREVKKVPLLRGKSVFNLFFENSTRTRTTFEIAATRLSADVLNLNINASSTSKGESLLDTINNLSAMHADLFVVRHASSGAPYLIAEHCAPHVHVINAGDGRHAHPTQGLLDMYTIRHYKRDFTKLRVAIVGDILHSRVARSDIHALTTLGVPEVRAIGPRTLLPGGLEQMGVKVFHNLDEGLKGVDVIIMLRLQNERMSGALLPSAQEYFKTWGLTPERLALAAPDAIVMHPGPMNRGVEIDSQVADGPQSVILNQVTFGIAVRMAVMGIVAGNSD</sequence>
<organism>
    <name type="scientific">Burkholderia orbicola (strain AU 1054)</name>
    <dbReference type="NCBI Taxonomy" id="331271"/>
    <lineage>
        <taxon>Bacteria</taxon>
        <taxon>Pseudomonadati</taxon>
        <taxon>Pseudomonadota</taxon>
        <taxon>Betaproteobacteria</taxon>
        <taxon>Burkholderiales</taxon>
        <taxon>Burkholderiaceae</taxon>
        <taxon>Burkholderia</taxon>
        <taxon>Burkholderia cepacia complex</taxon>
        <taxon>Burkholderia orbicola</taxon>
    </lineage>
</organism>
<name>PYRB_BURO1</name>
<keyword id="KW-0665">Pyrimidine biosynthesis</keyword>
<keyword id="KW-0808">Transferase</keyword>
<feature type="chain" id="PRO_0000321076" description="Aspartate carbamoyltransferase catalytic subunit">
    <location>
        <begin position="1"/>
        <end position="343"/>
    </location>
</feature>
<feature type="binding site" evidence="1">
    <location>
        <position position="91"/>
    </location>
    <ligand>
        <name>carbamoyl phosphate</name>
        <dbReference type="ChEBI" id="CHEBI:58228"/>
    </ligand>
</feature>
<feature type="binding site" evidence="1">
    <location>
        <position position="92"/>
    </location>
    <ligand>
        <name>carbamoyl phosphate</name>
        <dbReference type="ChEBI" id="CHEBI:58228"/>
    </ligand>
</feature>
<feature type="binding site" evidence="1">
    <location>
        <position position="119"/>
    </location>
    <ligand>
        <name>L-aspartate</name>
        <dbReference type="ChEBI" id="CHEBI:29991"/>
    </ligand>
</feature>
<feature type="binding site" evidence="1">
    <location>
        <position position="141"/>
    </location>
    <ligand>
        <name>carbamoyl phosphate</name>
        <dbReference type="ChEBI" id="CHEBI:58228"/>
    </ligand>
</feature>
<feature type="binding site" evidence="1">
    <location>
        <position position="171"/>
    </location>
    <ligand>
        <name>carbamoyl phosphate</name>
        <dbReference type="ChEBI" id="CHEBI:58228"/>
    </ligand>
</feature>
<feature type="binding site" evidence="1">
    <location>
        <position position="174"/>
    </location>
    <ligand>
        <name>carbamoyl phosphate</name>
        <dbReference type="ChEBI" id="CHEBI:58228"/>
    </ligand>
</feature>
<feature type="binding site" evidence="1">
    <location>
        <position position="204"/>
    </location>
    <ligand>
        <name>L-aspartate</name>
        <dbReference type="ChEBI" id="CHEBI:29991"/>
    </ligand>
</feature>
<feature type="binding site" evidence="1">
    <location>
        <position position="259"/>
    </location>
    <ligand>
        <name>L-aspartate</name>
        <dbReference type="ChEBI" id="CHEBI:29991"/>
    </ligand>
</feature>
<feature type="binding site" evidence="1">
    <location>
        <position position="300"/>
    </location>
    <ligand>
        <name>carbamoyl phosphate</name>
        <dbReference type="ChEBI" id="CHEBI:58228"/>
    </ligand>
</feature>
<feature type="binding site" evidence="1">
    <location>
        <position position="301"/>
    </location>
    <ligand>
        <name>carbamoyl phosphate</name>
        <dbReference type="ChEBI" id="CHEBI:58228"/>
    </ligand>
</feature>
<dbReference type="EC" id="2.1.3.2" evidence="1"/>
<dbReference type="EMBL" id="CP000378">
    <property type="protein sequence ID" value="ABF75297.1"/>
    <property type="molecule type" value="Genomic_DNA"/>
</dbReference>
<dbReference type="SMR" id="Q1BYK8"/>
<dbReference type="HOGENOM" id="CLU_043846_2_0_4"/>
<dbReference type="UniPathway" id="UPA00070">
    <property type="reaction ID" value="UER00116"/>
</dbReference>
<dbReference type="GO" id="GO:0005829">
    <property type="term" value="C:cytosol"/>
    <property type="evidence" value="ECO:0007669"/>
    <property type="project" value="TreeGrafter"/>
</dbReference>
<dbReference type="GO" id="GO:0016597">
    <property type="term" value="F:amino acid binding"/>
    <property type="evidence" value="ECO:0007669"/>
    <property type="project" value="InterPro"/>
</dbReference>
<dbReference type="GO" id="GO:0004070">
    <property type="term" value="F:aspartate carbamoyltransferase activity"/>
    <property type="evidence" value="ECO:0007669"/>
    <property type="project" value="UniProtKB-UniRule"/>
</dbReference>
<dbReference type="GO" id="GO:0006207">
    <property type="term" value="P:'de novo' pyrimidine nucleobase biosynthetic process"/>
    <property type="evidence" value="ECO:0007669"/>
    <property type="project" value="InterPro"/>
</dbReference>
<dbReference type="GO" id="GO:0044205">
    <property type="term" value="P:'de novo' UMP biosynthetic process"/>
    <property type="evidence" value="ECO:0007669"/>
    <property type="project" value="UniProtKB-UniRule"/>
</dbReference>
<dbReference type="GO" id="GO:0006520">
    <property type="term" value="P:amino acid metabolic process"/>
    <property type="evidence" value="ECO:0007669"/>
    <property type="project" value="InterPro"/>
</dbReference>
<dbReference type="FunFam" id="3.40.50.1370:FF:000007">
    <property type="entry name" value="Aspartate carbamoyltransferase"/>
    <property type="match status" value="1"/>
</dbReference>
<dbReference type="Gene3D" id="3.40.50.1370">
    <property type="entry name" value="Aspartate/ornithine carbamoyltransferase"/>
    <property type="match status" value="2"/>
</dbReference>
<dbReference type="HAMAP" id="MF_00001">
    <property type="entry name" value="Asp_carb_tr"/>
    <property type="match status" value="1"/>
</dbReference>
<dbReference type="InterPro" id="IPR006132">
    <property type="entry name" value="Asp/Orn_carbamoyltranf_P-bd"/>
</dbReference>
<dbReference type="InterPro" id="IPR006130">
    <property type="entry name" value="Asp/Orn_carbamoylTrfase"/>
</dbReference>
<dbReference type="InterPro" id="IPR036901">
    <property type="entry name" value="Asp/Orn_carbamoylTrfase_sf"/>
</dbReference>
<dbReference type="InterPro" id="IPR002082">
    <property type="entry name" value="Asp_carbamoyltransf"/>
</dbReference>
<dbReference type="InterPro" id="IPR006131">
    <property type="entry name" value="Asp_carbamoyltransf_Asp/Orn-bd"/>
</dbReference>
<dbReference type="NCBIfam" id="TIGR00670">
    <property type="entry name" value="asp_carb_tr"/>
    <property type="match status" value="1"/>
</dbReference>
<dbReference type="NCBIfam" id="NF002032">
    <property type="entry name" value="PRK00856.1"/>
    <property type="match status" value="1"/>
</dbReference>
<dbReference type="PANTHER" id="PTHR45753:SF6">
    <property type="entry name" value="ASPARTATE CARBAMOYLTRANSFERASE"/>
    <property type="match status" value="1"/>
</dbReference>
<dbReference type="PANTHER" id="PTHR45753">
    <property type="entry name" value="ORNITHINE CARBAMOYLTRANSFERASE, MITOCHONDRIAL"/>
    <property type="match status" value="1"/>
</dbReference>
<dbReference type="Pfam" id="PF00185">
    <property type="entry name" value="OTCace"/>
    <property type="match status" value="1"/>
</dbReference>
<dbReference type="Pfam" id="PF02729">
    <property type="entry name" value="OTCace_N"/>
    <property type="match status" value="1"/>
</dbReference>
<dbReference type="PRINTS" id="PR00100">
    <property type="entry name" value="AOTCASE"/>
</dbReference>
<dbReference type="PRINTS" id="PR00101">
    <property type="entry name" value="ATCASE"/>
</dbReference>
<dbReference type="SUPFAM" id="SSF53671">
    <property type="entry name" value="Aspartate/ornithine carbamoyltransferase"/>
    <property type="match status" value="1"/>
</dbReference>
<dbReference type="PROSITE" id="PS00097">
    <property type="entry name" value="CARBAMOYLTRANSFERASE"/>
    <property type="match status" value="1"/>
</dbReference>
<protein>
    <recommendedName>
        <fullName evidence="1">Aspartate carbamoyltransferase catalytic subunit</fullName>
        <ecNumber evidence="1">2.1.3.2</ecNumber>
    </recommendedName>
    <alternativeName>
        <fullName evidence="1">Aspartate transcarbamylase</fullName>
        <shortName evidence="1">ATCase</shortName>
    </alternativeName>
</protein>
<evidence type="ECO:0000255" key="1">
    <source>
        <dbReference type="HAMAP-Rule" id="MF_00001"/>
    </source>
</evidence>
<accession>Q1BYK8</accession>
<gene>
    <name evidence="1" type="primary">pyrB</name>
    <name type="ordered locus">Bcen_0385</name>
</gene>
<comment type="function">
    <text evidence="1">Catalyzes the condensation of carbamoyl phosphate and aspartate to form carbamoyl aspartate and inorganic phosphate, the committed step in the de novo pyrimidine nucleotide biosynthesis pathway.</text>
</comment>
<comment type="catalytic activity">
    <reaction evidence="1">
        <text>carbamoyl phosphate + L-aspartate = N-carbamoyl-L-aspartate + phosphate + H(+)</text>
        <dbReference type="Rhea" id="RHEA:20013"/>
        <dbReference type="ChEBI" id="CHEBI:15378"/>
        <dbReference type="ChEBI" id="CHEBI:29991"/>
        <dbReference type="ChEBI" id="CHEBI:32814"/>
        <dbReference type="ChEBI" id="CHEBI:43474"/>
        <dbReference type="ChEBI" id="CHEBI:58228"/>
        <dbReference type="EC" id="2.1.3.2"/>
    </reaction>
</comment>
<comment type="pathway">
    <text evidence="1">Pyrimidine metabolism; UMP biosynthesis via de novo pathway; (S)-dihydroorotate from bicarbonate: step 2/3.</text>
</comment>
<comment type="subunit">
    <text evidence="1">Heterododecamer (2C3:3R2) of six catalytic PyrB chains organized as two trimers (C3), and six regulatory PyrI chains organized as three dimers (R2).</text>
</comment>
<comment type="similarity">
    <text evidence="1">Belongs to the aspartate/ornithine carbamoyltransferase superfamily. ATCase family.</text>
</comment>